<keyword id="KW-0968">Cytoplasmic vesicle</keyword>
<keyword id="KW-0256">Endoplasmic reticulum</keyword>
<keyword id="KW-0931">ER-Golgi transport</keyword>
<keyword id="KW-0472">Membrane</keyword>
<keyword id="KW-0509">mRNA transport</keyword>
<keyword id="KW-0906">Nuclear pore complex</keyword>
<keyword id="KW-0539">Nucleus</keyword>
<keyword id="KW-0653">Protein transport</keyword>
<keyword id="KW-1185">Reference proteome</keyword>
<keyword id="KW-0677">Repeat</keyword>
<keyword id="KW-0811">Translocation</keyword>
<keyword id="KW-0813">Transport</keyword>
<keyword id="KW-0853">WD repeat</keyword>
<name>SEC13_ASPCL</name>
<comment type="function">
    <text evidence="2">Component of the coat protein complex II (COPII) which promotes the formation of transport vesicles from the endoplasmic reticulum (ER). The coat has two main functions, the physical deformation of the endoplasmic reticulum membrane into vesicles and the selection of cargo molecules. It also functions as a component of the nuclear pore complex (NPC). NPC components, collectively referred to as nucleoporins (NUPs), can play the role of both NPC structural components and of docking or interaction partners for transiently associated nuclear transport factors. Sec13 is required for efficient mRNA export from the nucleus to the cytoplasm and for correct nuclear pore biogenesis and distribution (By similarity).</text>
</comment>
<comment type="subunit">
    <text evidence="2">The COPII coat is composed of at least 5 proteins: the sec23/24 complex, the sec13/31 complex, and the protein sar1. Component of the nuclear pore complex (NPC). NPC constitutes the exclusive means of nucleocytoplasmic transport. NPCs allow the passive diffusion of ions and small molecules and the active, nuclear transport receptor-mediated bidirectional transport of macromolecules such as proteins, RNAs, ribonucleoparticles (RNPs), and ribosomal subunits across the nuclear envelope. Due to its 8-fold rotational symmetry, all subunits are present with 8 copies or multiples thereof.</text>
</comment>
<comment type="subcellular location">
    <subcellularLocation>
        <location evidence="1">Cytoplasmic vesicle</location>
        <location evidence="1">COPII-coated vesicle membrane</location>
        <topology evidence="1">Peripheral membrane protein</topology>
        <orientation evidence="1">Cytoplasmic side</orientation>
    </subcellularLocation>
    <subcellularLocation>
        <location evidence="1">Endoplasmic reticulum membrane</location>
        <topology evidence="1">Peripheral membrane protein</topology>
        <orientation evidence="1">Cytoplasmic side</orientation>
    </subcellularLocation>
    <subcellularLocation>
        <location evidence="2">Nucleus</location>
        <location evidence="2">Nuclear pore complex</location>
    </subcellularLocation>
</comment>
<comment type="similarity">
    <text evidence="3">Belongs to the WD repeat SEC13 family.</text>
</comment>
<sequence>MIHDAGLDYYGRRLATCSSDKTIKIFEIEGETHRLAETLKGHEGAVWCVAWAHPKFGTILASSSYDGKVLIWREQHQSPTSPAAGSAWTKVFDFSLHTASVNMVSWAPHESGCLLACASSDGHVSVLEFRDNSWTHQIFHAHGMGVNSISWAPAAAPGSLISSNPGPGQQRRFVTGGSDNLLKIWDYNPESKTYNITQTLEGHSDWVRDVAWSPSILSKSYIASASQDKTVRIWTSDASNPGQWTSQQLEFDTVLWRVSWSPSGNILAVSGGDNKVSLWKENLKGQWEKVKDIEE</sequence>
<evidence type="ECO:0000250" key="1"/>
<evidence type="ECO:0000250" key="2">
    <source>
        <dbReference type="UniProtKB" id="Q04491"/>
    </source>
</evidence>
<evidence type="ECO:0000305" key="3"/>
<dbReference type="EMBL" id="DS027054">
    <property type="protein sequence ID" value="EAW10075.1"/>
    <property type="molecule type" value="Genomic_DNA"/>
</dbReference>
<dbReference type="RefSeq" id="XP_001271501.1">
    <property type="nucleotide sequence ID" value="XM_001271500.1"/>
</dbReference>
<dbReference type="SMR" id="A1CGS0"/>
<dbReference type="STRING" id="344612.A1CGS0"/>
<dbReference type="EnsemblFungi" id="EAW10075">
    <property type="protein sequence ID" value="EAW10075"/>
    <property type="gene ID" value="ACLA_045400"/>
</dbReference>
<dbReference type="GeneID" id="4703825"/>
<dbReference type="KEGG" id="act:ACLA_045400"/>
<dbReference type="VEuPathDB" id="FungiDB:ACLA_045400"/>
<dbReference type="eggNOG" id="KOG1332">
    <property type="taxonomic scope" value="Eukaryota"/>
</dbReference>
<dbReference type="HOGENOM" id="CLU_032441_0_1_1"/>
<dbReference type="OMA" id="IWKEEGD"/>
<dbReference type="OrthoDB" id="364224at2759"/>
<dbReference type="Proteomes" id="UP000006701">
    <property type="component" value="Unassembled WGS sequence"/>
</dbReference>
<dbReference type="GO" id="GO:0030127">
    <property type="term" value="C:COPII vesicle coat"/>
    <property type="evidence" value="ECO:0007669"/>
    <property type="project" value="EnsemblFungi"/>
</dbReference>
<dbReference type="GO" id="GO:0005789">
    <property type="term" value="C:endoplasmic reticulum membrane"/>
    <property type="evidence" value="ECO:0007669"/>
    <property type="project" value="UniProtKB-SubCell"/>
</dbReference>
<dbReference type="GO" id="GO:0061700">
    <property type="term" value="C:GATOR2 complex"/>
    <property type="evidence" value="ECO:0007669"/>
    <property type="project" value="EnsemblFungi"/>
</dbReference>
<dbReference type="GO" id="GO:0031080">
    <property type="term" value="C:nuclear pore outer ring"/>
    <property type="evidence" value="ECO:0007669"/>
    <property type="project" value="EnsemblFungi"/>
</dbReference>
<dbReference type="GO" id="GO:0005198">
    <property type="term" value="F:structural molecule activity"/>
    <property type="evidence" value="ECO:0007669"/>
    <property type="project" value="EnsemblFungi"/>
</dbReference>
<dbReference type="GO" id="GO:0090114">
    <property type="term" value="P:COPII-coated vesicle budding"/>
    <property type="evidence" value="ECO:0007669"/>
    <property type="project" value="EnsemblFungi"/>
</dbReference>
<dbReference type="GO" id="GO:0036503">
    <property type="term" value="P:ERAD pathway"/>
    <property type="evidence" value="ECO:0007669"/>
    <property type="project" value="EnsemblFungi"/>
</dbReference>
<dbReference type="GO" id="GO:0051028">
    <property type="term" value="P:mRNA transport"/>
    <property type="evidence" value="ECO:0007669"/>
    <property type="project" value="UniProtKB-KW"/>
</dbReference>
<dbReference type="GO" id="GO:0051664">
    <property type="term" value="P:nuclear pore localization"/>
    <property type="evidence" value="ECO:0007669"/>
    <property type="project" value="EnsemblFungi"/>
</dbReference>
<dbReference type="GO" id="GO:0045893">
    <property type="term" value="P:positive regulation of DNA-templated transcription"/>
    <property type="evidence" value="ECO:0007669"/>
    <property type="project" value="EnsemblFungi"/>
</dbReference>
<dbReference type="GO" id="GO:1902953">
    <property type="term" value="P:positive regulation of ER to Golgi vesicle-mediated transport"/>
    <property type="evidence" value="ECO:0007669"/>
    <property type="project" value="EnsemblFungi"/>
</dbReference>
<dbReference type="GO" id="GO:0070863">
    <property type="term" value="P:positive regulation of protein exit from endoplasmic reticulum"/>
    <property type="evidence" value="ECO:0007669"/>
    <property type="project" value="EnsemblFungi"/>
</dbReference>
<dbReference type="GO" id="GO:1904263">
    <property type="term" value="P:positive regulation of TORC1 signaling"/>
    <property type="evidence" value="ECO:0007669"/>
    <property type="project" value="EnsemblFungi"/>
</dbReference>
<dbReference type="GO" id="GO:0032527">
    <property type="term" value="P:protein exit from endoplasmic reticulum"/>
    <property type="evidence" value="ECO:0007669"/>
    <property type="project" value="TreeGrafter"/>
</dbReference>
<dbReference type="GO" id="GO:0006606">
    <property type="term" value="P:protein import into nucleus"/>
    <property type="evidence" value="ECO:0007669"/>
    <property type="project" value="TreeGrafter"/>
</dbReference>
<dbReference type="FunFam" id="2.130.10.10:FF:000017">
    <property type="entry name" value="SEC13 homolog (S. cerevisiae)"/>
    <property type="match status" value="1"/>
</dbReference>
<dbReference type="Gene3D" id="2.130.10.10">
    <property type="entry name" value="YVTN repeat-like/Quinoprotein amine dehydrogenase"/>
    <property type="match status" value="1"/>
</dbReference>
<dbReference type="InterPro" id="IPR020472">
    <property type="entry name" value="G-protein_beta_WD-40_rep"/>
</dbReference>
<dbReference type="InterPro" id="IPR037363">
    <property type="entry name" value="Sec13/Seh1_fam"/>
</dbReference>
<dbReference type="InterPro" id="IPR015943">
    <property type="entry name" value="WD40/YVTN_repeat-like_dom_sf"/>
</dbReference>
<dbReference type="InterPro" id="IPR036322">
    <property type="entry name" value="WD40_repeat_dom_sf"/>
</dbReference>
<dbReference type="InterPro" id="IPR001680">
    <property type="entry name" value="WD40_rpt"/>
</dbReference>
<dbReference type="PANTHER" id="PTHR11024">
    <property type="entry name" value="NUCLEAR PORE COMPLEX PROTEIN SEC13 / SEH1 FAMILY MEMBER"/>
    <property type="match status" value="1"/>
</dbReference>
<dbReference type="PANTHER" id="PTHR11024:SF2">
    <property type="entry name" value="PROTEIN SEC13 HOMOLOG"/>
    <property type="match status" value="1"/>
</dbReference>
<dbReference type="Pfam" id="PF00400">
    <property type="entry name" value="WD40"/>
    <property type="match status" value="6"/>
</dbReference>
<dbReference type="PRINTS" id="PR00320">
    <property type="entry name" value="GPROTEINBRPT"/>
</dbReference>
<dbReference type="SMART" id="SM00320">
    <property type="entry name" value="WD40"/>
    <property type="match status" value="5"/>
</dbReference>
<dbReference type="SUPFAM" id="SSF50978">
    <property type="entry name" value="WD40 repeat-like"/>
    <property type="match status" value="1"/>
</dbReference>
<dbReference type="PROSITE" id="PS50082">
    <property type="entry name" value="WD_REPEATS_2"/>
    <property type="match status" value="4"/>
</dbReference>
<dbReference type="PROSITE" id="PS50294">
    <property type="entry name" value="WD_REPEATS_REGION"/>
    <property type="match status" value="1"/>
</dbReference>
<gene>
    <name type="primary">sec13</name>
    <name type="ORF">ACLA_045400</name>
</gene>
<proteinExistence type="inferred from homology"/>
<feature type="chain" id="PRO_0000295403" description="Protein transport protein sec13">
    <location>
        <begin position="1"/>
        <end position="295"/>
    </location>
</feature>
<feature type="repeat" description="WD 1">
    <location>
        <begin position="1"/>
        <end position="36"/>
    </location>
</feature>
<feature type="repeat" description="WD 2">
    <location>
        <begin position="41"/>
        <end position="82"/>
    </location>
</feature>
<feature type="repeat" description="WD 3">
    <location>
        <begin position="96"/>
        <end position="137"/>
    </location>
</feature>
<feature type="repeat" description="WD 4">
    <location>
        <begin position="141"/>
        <end position="195"/>
    </location>
</feature>
<feature type="repeat" description="WD 5">
    <location>
        <begin position="202"/>
        <end position="244"/>
    </location>
</feature>
<feature type="repeat" description="WD 6">
    <location>
        <begin position="250"/>
        <end position="289"/>
    </location>
</feature>
<organism>
    <name type="scientific">Aspergillus clavatus (strain ATCC 1007 / CBS 513.65 / DSM 816 / NCTC 3887 / NRRL 1 / QM 1276 / 107)</name>
    <dbReference type="NCBI Taxonomy" id="344612"/>
    <lineage>
        <taxon>Eukaryota</taxon>
        <taxon>Fungi</taxon>
        <taxon>Dikarya</taxon>
        <taxon>Ascomycota</taxon>
        <taxon>Pezizomycotina</taxon>
        <taxon>Eurotiomycetes</taxon>
        <taxon>Eurotiomycetidae</taxon>
        <taxon>Eurotiales</taxon>
        <taxon>Aspergillaceae</taxon>
        <taxon>Aspergillus</taxon>
        <taxon>Aspergillus subgen. Fumigati</taxon>
    </lineage>
</organism>
<protein>
    <recommendedName>
        <fullName>Protein transport protein sec13</fullName>
    </recommendedName>
</protein>
<reference key="1">
    <citation type="journal article" date="2008" name="PLoS Genet.">
        <title>Genomic islands in the pathogenic filamentous fungus Aspergillus fumigatus.</title>
        <authorList>
            <person name="Fedorova N.D."/>
            <person name="Khaldi N."/>
            <person name="Joardar V.S."/>
            <person name="Maiti R."/>
            <person name="Amedeo P."/>
            <person name="Anderson M.J."/>
            <person name="Crabtree J."/>
            <person name="Silva J.C."/>
            <person name="Badger J.H."/>
            <person name="Albarraq A."/>
            <person name="Angiuoli S."/>
            <person name="Bussey H."/>
            <person name="Bowyer P."/>
            <person name="Cotty P.J."/>
            <person name="Dyer P.S."/>
            <person name="Egan A."/>
            <person name="Galens K."/>
            <person name="Fraser-Liggett C.M."/>
            <person name="Haas B.J."/>
            <person name="Inman J.M."/>
            <person name="Kent R."/>
            <person name="Lemieux S."/>
            <person name="Malavazi I."/>
            <person name="Orvis J."/>
            <person name="Roemer T."/>
            <person name="Ronning C.M."/>
            <person name="Sundaram J.P."/>
            <person name="Sutton G."/>
            <person name="Turner G."/>
            <person name="Venter J.C."/>
            <person name="White O.R."/>
            <person name="Whitty B.R."/>
            <person name="Youngman P."/>
            <person name="Wolfe K.H."/>
            <person name="Goldman G.H."/>
            <person name="Wortman J.R."/>
            <person name="Jiang B."/>
            <person name="Denning D.W."/>
            <person name="Nierman W.C."/>
        </authorList>
    </citation>
    <scope>NUCLEOTIDE SEQUENCE [LARGE SCALE GENOMIC DNA]</scope>
    <source>
        <strain>ATCC 1007 / CBS 513.65 / DSM 816 / NCTC 3887 / NRRL 1 / QM 1276 / 107</strain>
    </source>
</reference>
<accession>A1CGS0</accession>